<sequence>MNRKKGDKGFESPRPYKLTHQVVCINNINFQRKSVVGYVELTIFPTVANLNRIKLNSKQCRIYRVRVNDLEAAFIYNDPTLEVCHHESKQRNLNYFSNAYAAAVSAVDPDAGNGELCIKVPSELWKHVDELKVLKVHINFSLDQPKGGLHFVVPNMEGSMAERGAHVFSCGYQNSTRFWFPCVDSYSELCTWKLEYTVDAAMVAVSNGDLVETVYTHDMRKKTFHYMLAIPTAASNISLAIGPFEILVDPYMHEVTHFCLPQLLPLLKHTTSYLHEVFEFYEEILTCRYPYSCFKTVFIDEAYVEVAAYASMSIFSTNLLHSAMIIDETPLTRRCLAQALAQQFFGCFISRMSWSDEWVLKGISGYIYGLWMKKTFGVNEYRHWIKQELDQIVAYELKTGGVLLHPIFGGGKEKDNPASHLHFSIKHPHTLSWEYYTMFQCKAHLVMRLIENRISMEFMLQVFNKLLSLASTASSQKFQSHMWSQMLVSTSGFLKSISNVSGKDIQPLIKQWVDQSGVVKFYGSFAFNRKRNVLELEIKQDYTSPGTQKYVGPLKVTVQELDGSFNHTLQIEENSLKHDIPCHSKSRRNKKKKIPLMNGEEVDMDLSAMDADSPLLWIRIDPDMSVLRKVEFEQSDFMWQYQLRYERDVVAQEEAILALEKFPTPASRLALTDILEQEQCFYRVRMLACFCLAKIANSMVSTWTGPPAMKSLFTRMFCCKTCPNIVKTNNFMNFQSYFLQKTMPVAMALLRDVHNLCPKEVLMFILDLIKYNDNRKNKFSDNYYRAELIDALANSVTPAVSVNNEVRTLDNLNPDVRLILEEITRFLNMEKLLPSYRHTITVSCLKAIRVLQKNGHVPSDPALFKSYAEYGHFVDVRIAALEAVVDYTKVDRSYEELQWLLTMVQNDPVPYIRHKILDMLTKNPPFTKNMESPLCNEALVDQLWKLMNSGTSHDWRLRCGAVDLYFTLFGLSRPSCLPLPELGLVLNLKEKKAVLNPTIIPESVANNQEPVNTTNNHGQPVVFQNTEDDHLIKETASSISGHQQGVKRKADMPLGSPLEPGQILEKNEDSKVKLKIRFSNSQEEEEIDMDTVHDSQAFIYHHLNMLERPSTPGKEQSSGEVTMHPVSAAPLSVFSKESNSSKHSDHHHHHHHEHKKKKKKTLQVWIRP</sequence>
<dbReference type="EMBL" id="AJ720696">
    <property type="protein sequence ID" value="CAG32355.1"/>
    <property type="molecule type" value="mRNA"/>
</dbReference>
<dbReference type="RefSeq" id="NP_001292091.1">
    <property type="nucleotide sequence ID" value="NM_001305162.1"/>
</dbReference>
<dbReference type="SMR" id="Q5ZIT8"/>
<dbReference type="FunCoup" id="Q5ZIT8">
    <property type="interactions" value="2734"/>
</dbReference>
<dbReference type="STRING" id="9031.ENSGALP00000057559"/>
<dbReference type="MEROPS" id="M01.972"/>
<dbReference type="GlyGen" id="Q5ZIT8">
    <property type="glycosylation" value="2 sites"/>
</dbReference>
<dbReference type="PaxDb" id="9031-ENSGALP00000026442"/>
<dbReference type="GeneID" id="428389"/>
<dbReference type="KEGG" id="gga:428389"/>
<dbReference type="CTD" id="6873"/>
<dbReference type="VEuPathDB" id="HostDB:geneid_428389"/>
<dbReference type="eggNOG" id="KOG1932">
    <property type="taxonomic scope" value="Eukaryota"/>
</dbReference>
<dbReference type="InParanoid" id="Q5ZIT8"/>
<dbReference type="OrthoDB" id="308861at2759"/>
<dbReference type="PhylomeDB" id="Q5ZIT8"/>
<dbReference type="PRO" id="PR:Q5ZIT8"/>
<dbReference type="Proteomes" id="UP000000539">
    <property type="component" value="Unassembled WGS sequence"/>
</dbReference>
<dbReference type="GO" id="GO:0005669">
    <property type="term" value="C:transcription factor TFIID complex"/>
    <property type="evidence" value="ECO:0000318"/>
    <property type="project" value="GO_Central"/>
</dbReference>
<dbReference type="GO" id="GO:0003682">
    <property type="term" value="F:chromatin binding"/>
    <property type="evidence" value="ECO:0000318"/>
    <property type="project" value="GO_Central"/>
</dbReference>
<dbReference type="GO" id="GO:0000976">
    <property type="term" value="F:transcription cis-regulatory region binding"/>
    <property type="evidence" value="ECO:0000318"/>
    <property type="project" value="GO_Central"/>
</dbReference>
<dbReference type="GO" id="GO:0006367">
    <property type="term" value="P:transcription initiation at RNA polymerase II promoter"/>
    <property type="evidence" value="ECO:0000318"/>
    <property type="project" value="GO_Central"/>
</dbReference>
<dbReference type="CDD" id="cd09839">
    <property type="entry name" value="M1_like_TAF2"/>
    <property type="match status" value="1"/>
</dbReference>
<dbReference type="FunFam" id="2.60.40.1730:FF:000003">
    <property type="entry name" value="Transcription initiation factor TFIID subunit 2"/>
    <property type="match status" value="1"/>
</dbReference>
<dbReference type="FunFam" id="1.10.390.10:FF:000005">
    <property type="entry name" value="transcription initiation factor TFIID subunit 2 isoform X1"/>
    <property type="match status" value="1"/>
</dbReference>
<dbReference type="Gene3D" id="1.10.390.10">
    <property type="entry name" value="Neutral Protease Domain 2"/>
    <property type="match status" value="1"/>
</dbReference>
<dbReference type="Gene3D" id="2.60.40.1730">
    <property type="entry name" value="tricorn interacting facor f3 domain"/>
    <property type="match status" value="1"/>
</dbReference>
<dbReference type="InterPro" id="IPR042097">
    <property type="entry name" value="Aminopeptidase_N-like_N_sf"/>
</dbReference>
<dbReference type="InterPro" id="IPR016024">
    <property type="entry name" value="ARM-type_fold"/>
</dbReference>
<dbReference type="InterPro" id="IPR027268">
    <property type="entry name" value="Peptidase_M4/M1_CTD_sf"/>
</dbReference>
<dbReference type="InterPro" id="IPR037813">
    <property type="entry name" value="TAF2"/>
</dbReference>
<dbReference type="PANTHER" id="PTHR15137">
    <property type="entry name" value="TRANSCRIPTION INITIATION FACTOR TFIID"/>
    <property type="match status" value="1"/>
</dbReference>
<dbReference type="PANTHER" id="PTHR15137:SF9">
    <property type="entry name" value="TRANSCRIPTION INITIATION FACTOR TFIID SUBUNIT 2"/>
    <property type="match status" value="1"/>
</dbReference>
<dbReference type="Pfam" id="PF25316">
    <property type="entry name" value="TAF2_3rd"/>
    <property type="match status" value="1"/>
</dbReference>
<dbReference type="SUPFAM" id="SSF48371">
    <property type="entry name" value="ARM repeat"/>
    <property type="match status" value="1"/>
</dbReference>
<dbReference type="SUPFAM" id="SSF63737">
    <property type="entry name" value="Leukotriene A4 hydrolase N-terminal domain"/>
    <property type="match status" value="1"/>
</dbReference>
<dbReference type="SUPFAM" id="SSF55486">
    <property type="entry name" value="Metalloproteases ('zincins'), catalytic domain"/>
    <property type="match status" value="1"/>
</dbReference>
<keyword id="KW-0539">Nucleus</keyword>
<keyword id="KW-1185">Reference proteome</keyword>
<keyword id="KW-0804">Transcription</keyword>
<keyword id="KW-0805">Transcription regulation</keyword>
<accession>Q5ZIT8</accession>
<comment type="function">
    <text evidence="2">The TFIID basal transcription factor complex plays a major role in the initiation of RNA polymerase II (Pol II)-dependent transcription. TFIID recognizes and binds promoters with or without a TATA box via its subunit TBP, a TATA-box-binding protein, and promotes assembly of the pre-initiation complex (PIC). The TFIID complex consists of TBP and TBP-associated factors (TAFs).</text>
</comment>
<comment type="subunit">
    <text evidence="2">Component of the TFIID basal transcription factor complex, composed of TATA-box-binding protein TBP, and a number of TBP-associated factors (TAFs).</text>
</comment>
<comment type="subcellular location">
    <subcellularLocation>
        <location evidence="1">Nucleus</location>
    </subcellularLocation>
</comment>
<comment type="similarity">
    <text evidence="4">Belongs to the TAF2 family.</text>
</comment>
<protein>
    <recommendedName>
        <fullName>Transcription initiation factor TFIID subunit 2</fullName>
    </recommendedName>
    <alternativeName>
        <fullName>TBP-associated factor 150 kDa</fullName>
    </alternativeName>
    <alternativeName>
        <fullName>Transcription initiation factor TFIID 150 kDa subunit</fullName>
        <shortName>TAF(II)150</shortName>
        <shortName>TAFII-150</shortName>
        <shortName>TAFII150</shortName>
    </alternativeName>
</protein>
<feature type="chain" id="PRO_0000252426" description="Transcription initiation factor TFIID subunit 2">
    <location>
        <begin position="1"/>
        <end position="1168"/>
    </location>
</feature>
<feature type="region of interest" description="Disordered" evidence="3">
    <location>
        <begin position="1039"/>
        <end position="1066"/>
    </location>
</feature>
<feature type="region of interest" description="Disordered" evidence="3">
    <location>
        <begin position="1135"/>
        <end position="1168"/>
    </location>
</feature>
<feature type="compositionally biased region" description="Basic residues" evidence="3">
    <location>
        <begin position="1144"/>
        <end position="1161"/>
    </location>
</feature>
<proteinExistence type="evidence at transcript level"/>
<organism>
    <name type="scientific">Gallus gallus</name>
    <name type="common">Chicken</name>
    <dbReference type="NCBI Taxonomy" id="9031"/>
    <lineage>
        <taxon>Eukaryota</taxon>
        <taxon>Metazoa</taxon>
        <taxon>Chordata</taxon>
        <taxon>Craniata</taxon>
        <taxon>Vertebrata</taxon>
        <taxon>Euteleostomi</taxon>
        <taxon>Archelosauria</taxon>
        <taxon>Archosauria</taxon>
        <taxon>Dinosauria</taxon>
        <taxon>Saurischia</taxon>
        <taxon>Theropoda</taxon>
        <taxon>Coelurosauria</taxon>
        <taxon>Aves</taxon>
        <taxon>Neognathae</taxon>
        <taxon>Galloanserae</taxon>
        <taxon>Galliformes</taxon>
        <taxon>Phasianidae</taxon>
        <taxon>Phasianinae</taxon>
        <taxon>Gallus</taxon>
    </lineage>
</organism>
<reference key="1">
    <citation type="journal article" date="2005" name="Genome Biol.">
        <title>Full-length cDNAs from chicken bursal lymphocytes to facilitate gene function analysis.</title>
        <authorList>
            <person name="Caldwell R.B."/>
            <person name="Kierzek A.M."/>
            <person name="Arakawa H."/>
            <person name="Bezzubov Y."/>
            <person name="Zaim J."/>
            <person name="Fiedler P."/>
            <person name="Kutter S."/>
            <person name="Blagodatski A."/>
            <person name="Kostovska D."/>
            <person name="Koter M."/>
            <person name="Plachy J."/>
            <person name="Carninci P."/>
            <person name="Hayashizaki Y."/>
            <person name="Buerstedde J.-M."/>
        </authorList>
    </citation>
    <scope>NUCLEOTIDE SEQUENCE [LARGE SCALE MRNA]</scope>
    <source>
        <strain>CB</strain>
        <tissue>Bursa of Fabricius</tissue>
    </source>
</reference>
<gene>
    <name type="primary">TAF2</name>
    <name type="ORF">RCJMB04_23j21</name>
</gene>
<evidence type="ECO:0000250" key="1"/>
<evidence type="ECO:0000250" key="2">
    <source>
        <dbReference type="UniProtKB" id="Q6P1X5"/>
    </source>
</evidence>
<evidence type="ECO:0000256" key="3">
    <source>
        <dbReference type="SAM" id="MobiDB-lite"/>
    </source>
</evidence>
<evidence type="ECO:0000305" key="4"/>
<name>TAF2_CHICK</name>